<accession>B3QCE1</accession>
<organism>
    <name type="scientific">Rhodopseudomonas palustris (strain TIE-1)</name>
    <dbReference type="NCBI Taxonomy" id="395960"/>
    <lineage>
        <taxon>Bacteria</taxon>
        <taxon>Pseudomonadati</taxon>
        <taxon>Pseudomonadota</taxon>
        <taxon>Alphaproteobacteria</taxon>
        <taxon>Hyphomicrobiales</taxon>
        <taxon>Nitrobacteraceae</taxon>
        <taxon>Rhodopseudomonas</taxon>
    </lineage>
</organism>
<dbReference type="EMBL" id="CP001096">
    <property type="protein sequence ID" value="ACF03742.1"/>
    <property type="molecule type" value="Genomic_DNA"/>
</dbReference>
<dbReference type="RefSeq" id="WP_011160302.1">
    <property type="nucleotide sequence ID" value="NC_011004.1"/>
</dbReference>
<dbReference type="SMR" id="B3QCE1"/>
<dbReference type="GeneID" id="66895931"/>
<dbReference type="KEGG" id="rpt:Rpal_5255"/>
<dbReference type="HOGENOM" id="CLU_128074_1_0_5"/>
<dbReference type="OrthoDB" id="9795226at2"/>
<dbReference type="Proteomes" id="UP000001725">
    <property type="component" value="Chromosome"/>
</dbReference>
<dbReference type="GO" id="GO:0070987">
    <property type="term" value="P:error-free translesion synthesis"/>
    <property type="evidence" value="ECO:0007669"/>
    <property type="project" value="TreeGrafter"/>
</dbReference>
<dbReference type="Gene3D" id="2.60.40.1470">
    <property type="entry name" value="ApaG domain"/>
    <property type="match status" value="1"/>
</dbReference>
<dbReference type="HAMAP" id="MF_00791">
    <property type="entry name" value="ApaG"/>
    <property type="match status" value="1"/>
</dbReference>
<dbReference type="InterPro" id="IPR007474">
    <property type="entry name" value="ApaG_domain"/>
</dbReference>
<dbReference type="InterPro" id="IPR036767">
    <property type="entry name" value="ApaG_sf"/>
</dbReference>
<dbReference type="InterPro" id="IPR023065">
    <property type="entry name" value="Uncharacterised_ApaG"/>
</dbReference>
<dbReference type="NCBIfam" id="NF003967">
    <property type="entry name" value="PRK05461.1"/>
    <property type="match status" value="1"/>
</dbReference>
<dbReference type="PANTHER" id="PTHR14289">
    <property type="entry name" value="F-BOX ONLY PROTEIN 3"/>
    <property type="match status" value="1"/>
</dbReference>
<dbReference type="PANTHER" id="PTHR14289:SF16">
    <property type="entry name" value="POLYMERASE DELTA-INTERACTING PROTEIN 2"/>
    <property type="match status" value="1"/>
</dbReference>
<dbReference type="Pfam" id="PF04379">
    <property type="entry name" value="DUF525"/>
    <property type="match status" value="1"/>
</dbReference>
<dbReference type="SUPFAM" id="SSF110069">
    <property type="entry name" value="ApaG-like"/>
    <property type="match status" value="1"/>
</dbReference>
<dbReference type="PROSITE" id="PS51087">
    <property type="entry name" value="APAG"/>
    <property type="match status" value="1"/>
</dbReference>
<feature type="chain" id="PRO_1000133806" description="Protein ApaG">
    <location>
        <begin position="1"/>
        <end position="130"/>
    </location>
</feature>
<feature type="domain" description="ApaG" evidence="1">
    <location>
        <begin position="3"/>
        <end position="127"/>
    </location>
</feature>
<evidence type="ECO:0000255" key="1">
    <source>
        <dbReference type="HAMAP-Rule" id="MF_00791"/>
    </source>
</evidence>
<proteinExistence type="inferred from homology"/>
<sequence length="130" mass="14691">MYRAVTRRIEVTVEPNYLPERSSAENRQYFWSYTVVITNSGEETVKLRTRHWVITDASGRTQEVRGEGVVGEQPVLAPGERFEYTSGVPLPTASGFMAGRYQMETEAGEKFEIDVPPFSLDSPEGKRTLN</sequence>
<protein>
    <recommendedName>
        <fullName evidence="1">Protein ApaG</fullName>
    </recommendedName>
</protein>
<name>APAG_RHOPT</name>
<reference key="1">
    <citation type="submission" date="2008-05" db="EMBL/GenBank/DDBJ databases">
        <title>Complete sequence of Rhodopseudomonas palustris TIE-1.</title>
        <authorList>
            <consortium name="US DOE Joint Genome Institute"/>
            <person name="Lucas S."/>
            <person name="Copeland A."/>
            <person name="Lapidus A."/>
            <person name="Glavina del Rio T."/>
            <person name="Dalin E."/>
            <person name="Tice H."/>
            <person name="Pitluck S."/>
            <person name="Chain P."/>
            <person name="Malfatti S."/>
            <person name="Shin M."/>
            <person name="Vergez L."/>
            <person name="Lang D."/>
            <person name="Schmutz J."/>
            <person name="Larimer F."/>
            <person name="Land M."/>
            <person name="Hauser L."/>
            <person name="Kyrpides N."/>
            <person name="Mikhailova N."/>
            <person name="Emerson D."/>
            <person name="Newman D.K."/>
            <person name="Roden E."/>
            <person name="Richardson P."/>
        </authorList>
    </citation>
    <scope>NUCLEOTIDE SEQUENCE [LARGE SCALE GENOMIC DNA]</scope>
    <source>
        <strain>TIE-1</strain>
    </source>
</reference>
<gene>
    <name evidence="1" type="primary">apaG</name>
    <name type="ordered locus">Rpal_5255</name>
</gene>